<name>TRUB_PELTS</name>
<protein>
    <recommendedName>
        <fullName evidence="1">tRNA pseudouridine synthase B</fullName>
        <ecNumber evidence="1">5.4.99.25</ecNumber>
    </recommendedName>
    <alternativeName>
        <fullName evidence="1">tRNA pseudouridine(55) synthase</fullName>
        <shortName evidence="1">Psi55 synthase</shortName>
    </alternativeName>
    <alternativeName>
        <fullName evidence="1">tRNA pseudouridylate synthase</fullName>
    </alternativeName>
    <alternativeName>
        <fullName evidence="1">tRNA-uridine isomerase</fullName>
    </alternativeName>
</protein>
<reference key="1">
    <citation type="journal article" date="2008" name="Genome Res.">
        <title>The genome of Pelotomaculum thermopropionicum reveals niche-associated evolution in anaerobic microbiota.</title>
        <authorList>
            <person name="Kosaka T."/>
            <person name="Kato S."/>
            <person name="Shimoyama T."/>
            <person name="Ishii S."/>
            <person name="Abe T."/>
            <person name="Watanabe K."/>
        </authorList>
    </citation>
    <scope>NUCLEOTIDE SEQUENCE [LARGE SCALE GENOMIC DNA]</scope>
    <source>
        <strain>DSM 13744 / JCM 10971 / SI</strain>
    </source>
</reference>
<accession>A5D2S3</accession>
<keyword id="KW-0413">Isomerase</keyword>
<keyword id="KW-1185">Reference proteome</keyword>
<keyword id="KW-0819">tRNA processing</keyword>
<dbReference type="EC" id="5.4.99.25" evidence="1"/>
<dbReference type="EMBL" id="AP009389">
    <property type="protein sequence ID" value="BAF59453.1"/>
    <property type="molecule type" value="Genomic_DNA"/>
</dbReference>
<dbReference type="SMR" id="A5D2S3"/>
<dbReference type="STRING" id="370438.PTH_1272"/>
<dbReference type="KEGG" id="pth:PTH_1272"/>
<dbReference type="eggNOG" id="COG0130">
    <property type="taxonomic scope" value="Bacteria"/>
</dbReference>
<dbReference type="HOGENOM" id="CLU_032087_0_1_9"/>
<dbReference type="Proteomes" id="UP000006556">
    <property type="component" value="Chromosome"/>
</dbReference>
<dbReference type="GO" id="GO:0003723">
    <property type="term" value="F:RNA binding"/>
    <property type="evidence" value="ECO:0007669"/>
    <property type="project" value="InterPro"/>
</dbReference>
<dbReference type="GO" id="GO:0160148">
    <property type="term" value="F:tRNA pseudouridine(55) synthase activity"/>
    <property type="evidence" value="ECO:0007669"/>
    <property type="project" value="UniProtKB-EC"/>
</dbReference>
<dbReference type="GO" id="GO:1990481">
    <property type="term" value="P:mRNA pseudouridine synthesis"/>
    <property type="evidence" value="ECO:0007669"/>
    <property type="project" value="TreeGrafter"/>
</dbReference>
<dbReference type="GO" id="GO:0031119">
    <property type="term" value="P:tRNA pseudouridine synthesis"/>
    <property type="evidence" value="ECO:0007669"/>
    <property type="project" value="UniProtKB-UniRule"/>
</dbReference>
<dbReference type="CDD" id="cd02573">
    <property type="entry name" value="PseudoU_synth_EcTruB"/>
    <property type="match status" value="1"/>
</dbReference>
<dbReference type="CDD" id="cd07953">
    <property type="entry name" value="PUA"/>
    <property type="match status" value="1"/>
</dbReference>
<dbReference type="Gene3D" id="3.30.2350.10">
    <property type="entry name" value="Pseudouridine synthase"/>
    <property type="match status" value="1"/>
</dbReference>
<dbReference type="Gene3D" id="2.30.130.10">
    <property type="entry name" value="PUA domain"/>
    <property type="match status" value="1"/>
</dbReference>
<dbReference type="HAMAP" id="MF_01080">
    <property type="entry name" value="TruB_bact"/>
    <property type="match status" value="1"/>
</dbReference>
<dbReference type="InterPro" id="IPR020103">
    <property type="entry name" value="PsdUridine_synth_cat_dom_sf"/>
</dbReference>
<dbReference type="InterPro" id="IPR002501">
    <property type="entry name" value="PsdUridine_synth_N"/>
</dbReference>
<dbReference type="InterPro" id="IPR015947">
    <property type="entry name" value="PUA-like_sf"/>
</dbReference>
<dbReference type="InterPro" id="IPR036974">
    <property type="entry name" value="PUA_sf"/>
</dbReference>
<dbReference type="InterPro" id="IPR014780">
    <property type="entry name" value="tRNA_psdUridine_synth_TruB"/>
</dbReference>
<dbReference type="InterPro" id="IPR032819">
    <property type="entry name" value="TruB_C"/>
</dbReference>
<dbReference type="NCBIfam" id="TIGR00431">
    <property type="entry name" value="TruB"/>
    <property type="match status" value="1"/>
</dbReference>
<dbReference type="PANTHER" id="PTHR13767:SF2">
    <property type="entry name" value="PSEUDOURIDYLATE SYNTHASE TRUB1"/>
    <property type="match status" value="1"/>
</dbReference>
<dbReference type="PANTHER" id="PTHR13767">
    <property type="entry name" value="TRNA-PSEUDOURIDINE SYNTHASE"/>
    <property type="match status" value="1"/>
</dbReference>
<dbReference type="Pfam" id="PF16198">
    <property type="entry name" value="TruB_C_2"/>
    <property type="match status" value="1"/>
</dbReference>
<dbReference type="Pfam" id="PF01509">
    <property type="entry name" value="TruB_N"/>
    <property type="match status" value="1"/>
</dbReference>
<dbReference type="SUPFAM" id="SSF55120">
    <property type="entry name" value="Pseudouridine synthase"/>
    <property type="match status" value="1"/>
</dbReference>
<dbReference type="SUPFAM" id="SSF88697">
    <property type="entry name" value="PUA domain-like"/>
    <property type="match status" value="1"/>
</dbReference>
<dbReference type="PROSITE" id="PS50890">
    <property type="entry name" value="PUA"/>
    <property type="match status" value="1"/>
</dbReference>
<gene>
    <name evidence="1" type="primary">truB</name>
    <name type="ordered locus">PTH_1272</name>
</gene>
<proteinExistence type="inferred from homology"/>
<sequence length="316" mass="34462">MNGIVNVLKPPGMSSHDVVDRIRRIFGVKKAGHTGTLDPGAAGVLVVCLGVATRLARFLLGEDKEYRVEITFGMSTSTGDSYGEITDQRDASFLKEHDIIRVLPEFTGEVRQVPPMTSAIKWRGKKLYELAREGLVVERQERAVYIKSLEFIRGSGWGTPSPRALMHLSCSKGTYVRSLCHDMGSRLGCGAHMSFLVRTRAGPFKIADSVTLEELQAAASKGVLERKIIEMDRAVSEYPEVIVKSSAVKAVAAGSKLYIPGVARMPLDLDCGKLVRLTGPDGLLAIAEAGREPFDKEKLFFKPVCVLARQAGRSSN</sequence>
<feature type="chain" id="PRO_1000084636" description="tRNA pseudouridine synthase B">
    <location>
        <begin position="1"/>
        <end position="316"/>
    </location>
</feature>
<feature type="domain" description="PUA" evidence="1">
    <location>
        <begin position="238"/>
        <end position="312"/>
    </location>
</feature>
<feature type="active site" description="Nucleophile" evidence="1">
    <location>
        <position position="38"/>
    </location>
</feature>
<evidence type="ECO:0000255" key="1">
    <source>
        <dbReference type="HAMAP-Rule" id="MF_01080"/>
    </source>
</evidence>
<comment type="function">
    <text evidence="1">Responsible for synthesis of pseudouridine from uracil-55 in the psi GC loop of transfer RNAs.</text>
</comment>
<comment type="catalytic activity">
    <reaction evidence="1">
        <text>uridine(55) in tRNA = pseudouridine(55) in tRNA</text>
        <dbReference type="Rhea" id="RHEA:42532"/>
        <dbReference type="Rhea" id="RHEA-COMP:10101"/>
        <dbReference type="Rhea" id="RHEA-COMP:10102"/>
        <dbReference type="ChEBI" id="CHEBI:65314"/>
        <dbReference type="ChEBI" id="CHEBI:65315"/>
        <dbReference type="EC" id="5.4.99.25"/>
    </reaction>
</comment>
<comment type="similarity">
    <text evidence="1">Belongs to the pseudouridine synthase TruB family. Type 1 subfamily.</text>
</comment>
<organism>
    <name type="scientific">Pelotomaculum thermopropionicum (strain DSM 13744 / JCM 10971 / SI)</name>
    <dbReference type="NCBI Taxonomy" id="370438"/>
    <lineage>
        <taxon>Bacteria</taxon>
        <taxon>Bacillati</taxon>
        <taxon>Bacillota</taxon>
        <taxon>Clostridia</taxon>
        <taxon>Eubacteriales</taxon>
        <taxon>Desulfotomaculaceae</taxon>
        <taxon>Pelotomaculum</taxon>
    </lineage>
</organism>